<keyword id="KW-0945">Host-virus interaction</keyword>
<keyword id="KW-1185">Reference proteome</keyword>
<reference key="1">
    <citation type="journal article" date="2004" name="Arch. Virol.">
        <title>Analysis of an isolate of Mungbean yellow mosaic virus (MYMV) with a highly variable DNA B component.</title>
        <authorList>
            <person name="Karthikeyan A.S."/>
            <person name="Vanitharani R."/>
            <person name="Balaji V."/>
            <person name="Anuradha S."/>
            <person name="Thillaichidambaram P."/>
            <person name="Shivaprasad P.V."/>
            <person name="Parameswari C."/>
            <person name="Balamani V."/>
            <person name="Saminathan M."/>
            <person name="Veluthambi K."/>
        </authorList>
    </citation>
    <scope>NUCLEOTIDE SEQUENCE [GENOMIC DNA]</scope>
</reference>
<protein>
    <recommendedName>
        <fullName>Replication enhancer protein</fullName>
        <shortName>REn</shortName>
    </recommendedName>
    <alternativeName>
        <fullName>Protein AC3</fullName>
    </alternativeName>
    <alternativeName>
        <fullName>Protein AL3</fullName>
    </alternativeName>
</protein>
<dbReference type="EMBL" id="AJ132575">
    <property type="protein sequence ID" value="CAA10705.1"/>
    <property type="molecule type" value="Genomic_DNA"/>
</dbReference>
<dbReference type="Proteomes" id="UP000007784">
    <property type="component" value="Genome"/>
</dbReference>
<dbReference type="GO" id="GO:0016032">
    <property type="term" value="P:viral process"/>
    <property type="evidence" value="ECO:0007669"/>
    <property type="project" value="InterPro"/>
</dbReference>
<dbReference type="InterPro" id="IPR000657">
    <property type="entry name" value="Gemini_AL3"/>
</dbReference>
<dbReference type="Pfam" id="PF01407">
    <property type="entry name" value="Gemini_AL3"/>
    <property type="match status" value="1"/>
</dbReference>
<dbReference type="PRINTS" id="PR00231">
    <property type="entry name" value="GEMCOATAL3"/>
</dbReference>
<sequence>MDFRTGDNITAAQLKNGVFIWEVRNPLSFKIMQHRQIRPGSQMYVTQIRIMFNHGLKKALLMHKCFLDLTLYHYLTATSGMILSTFSDQLFRYLNNLGVISIGNVLKGASHILYEKLHHVEDVSLTHNVQYKLY</sequence>
<name>REN_MYMVV</name>
<evidence type="ECO:0000250" key="1"/>
<evidence type="ECO:0000305" key="2"/>
<organism>
    <name type="scientific">Mungbean yellow mosaic virus (strain Vigna)</name>
    <name type="common">MYMV</name>
    <dbReference type="NCBI Taxonomy" id="223295"/>
    <lineage>
        <taxon>Viruses</taxon>
        <taxon>Monodnaviria</taxon>
        <taxon>Shotokuvirae</taxon>
        <taxon>Cressdnaviricota</taxon>
        <taxon>Repensiviricetes</taxon>
        <taxon>Geplafuvirales</taxon>
        <taxon>Geminiviridae</taxon>
        <taxon>Begomovirus</taxon>
        <taxon>Mungbean yellow mosaic virus</taxon>
    </lineage>
</organism>
<proteinExistence type="inferred from homology"/>
<accession>Q9YPS4</accession>
<gene>
    <name type="ORF">AC3</name>
    <name type="ORF">AL3</name>
</gene>
<organismHost>
    <name type="scientific">Glycine max</name>
    <name type="common">Soybean</name>
    <name type="synonym">Glycine hispida</name>
    <dbReference type="NCBI Taxonomy" id="3847"/>
</organismHost>
<organismHost>
    <name type="scientific">Vigna mungo</name>
    <name type="common">Black gram</name>
    <name type="synonym">Phaseolus mungo</name>
    <dbReference type="NCBI Taxonomy" id="3915"/>
</organismHost>
<organismHost>
    <name type="scientific">Vigna radiata</name>
    <name type="common">Mung bean</name>
    <dbReference type="NCBI Taxonomy" id="157791"/>
</organismHost>
<organismHost>
    <name type="scientific">Vigna radiata var. radiata</name>
    <name type="common">Mung bean</name>
    <name type="synonym">Phaseolus aureus</name>
    <dbReference type="NCBI Taxonomy" id="3916"/>
</organismHost>
<organismHost>
    <name type="scientific">Vigna unguiculata</name>
    <name type="common">Cowpea</name>
    <dbReference type="NCBI Taxonomy" id="3917"/>
</organismHost>
<comment type="function">
    <text evidence="1">Increases viral DNA accumulation. Enhances infectivity and symptom expression (By similarity).</text>
</comment>
<comment type="subunit">
    <text evidence="1">Homooligomer. Interacts with the replication-associated protein (REP). Interacts with host proliferating cell nuclear antigen (PCNA). Interacts with host retinoblastoma-related protein 1 (RBR1), and may thereby deregulate the host cell cycle. Oligomerization and interaction with PCNA are necessary for optimal replication enhancement (By similarity).</text>
</comment>
<comment type="similarity">
    <text evidence="2">Belongs to the geminiviridae replication enhancer protein family.</text>
</comment>
<feature type="chain" id="PRO_0000323683" description="Replication enhancer protein">
    <location>
        <begin position="1"/>
        <end position="134"/>
    </location>
</feature>